<accession>K4CA50</accession>
<name>CPT7_SOLLC</name>
<organism>
    <name type="scientific">Solanum lycopersicum</name>
    <name type="common">Tomato</name>
    <name type="synonym">Lycopersicon esculentum</name>
    <dbReference type="NCBI Taxonomy" id="4081"/>
    <lineage>
        <taxon>Eukaryota</taxon>
        <taxon>Viridiplantae</taxon>
        <taxon>Streptophyta</taxon>
        <taxon>Embryophyta</taxon>
        <taxon>Tracheophyta</taxon>
        <taxon>Spermatophyta</taxon>
        <taxon>Magnoliopsida</taxon>
        <taxon>eudicotyledons</taxon>
        <taxon>Gunneridae</taxon>
        <taxon>Pentapetalae</taxon>
        <taxon>asterids</taxon>
        <taxon>lamiids</taxon>
        <taxon>Solanales</taxon>
        <taxon>Solanaceae</taxon>
        <taxon>Solanoideae</taxon>
        <taxon>Solaneae</taxon>
        <taxon>Solanum</taxon>
        <taxon>Solanum subgen. Lycopersicon</taxon>
    </lineage>
</organism>
<comment type="function">
    <text evidence="3">Uses geranylgeranyl diphosphate to catalyze the cis-prenyl chain elongation and produce polyprenyl diphosphate with a chain of 35 carbons.</text>
</comment>
<comment type="cofactor">
    <cofactor evidence="3">
        <name>Mg(2+)</name>
        <dbReference type="ChEBI" id="CHEBI:18420"/>
    </cofactor>
</comment>
<comment type="subcellular location">
    <subcellularLocation>
        <location evidence="3">Plastid</location>
        <location evidence="3">Chloroplast</location>
    </subcellularLocation>
    <text evidence="3">Localizes in punctuate patterns inside the chloroplasts.</text>
</comment>
<comment type="tissue specificity">
    <text evidence="3">Expressed in leaf trichomes and stem trichomes.</text>
</comment>
<comment type="similarity">
    <text evidence="5">Belongs to the UPP synthase family.</text>
</comment>
<gene>
    <name evidence="4" type="primary">CPT7</name>
    <name evidence="5" type="ordered locus">Solyc06g076910</name>
</gene>
<dbReference type="EC" id="2.5.1.-" evidence="5"/>
<dbReference type="EMBL" id="JX943889">
    <property type="protein sequence ID" value="AFW98431.1"/>
    <property type="molecule type" value="Genomic_DNA"/>
</dbReference>
<dbReference type="EMBL" id="CM001069">
    <property type="status" value="NOT_ANNOTATED_CDS"/>
    <property type="molecule type" value="Genomic_DNA"/>
</dbReference>
<dbReference type="RefSeq" id="NP_001307175.1">
    <property type="nucleotide sequence ID" value="NM_001320246.1"/>
</dbReference>
<dbReference type="SMR" id="K4CA50"/>
<dbReference type="GeneID" id="101256886"/>
<dbReference type="KEGG" id="sly:101256886"/>
<dbReference type="eggNOG" id="KOG1602">
    <property type="taxonomic scope" value="Eukaryota"/>
</dbReference>
<dbReference type="HOGENOM" id="CLU_038505_1_0_1"/>
<dbReference type="InParanoid" id="K4CA50"/>
<dbReference type="OrthoDB" id="4173905at2759"/>
<dbReference type="PhylomeDB" id="K4CA50"/>
<dbReference type="Proteomes" id="UP000004994">
    <property type="component" value="Unplaced"/>
</dbReference>
<dbReference type="ExpressionAtlas" id="K4CA50">
    <property type="expression patterns" value="baseline and differential"/>
</dbReference>
<dbReference type="GO" id="GO:0009507">
    <property type="term" value="C:chloroplast"/>
    <property type="evidence" value="ECO:0000314"/>
    <property type="project" value="UniProtKB"/>
</dbReference>
<dbReference type="GO" id="GO:0009570">
    <property type="term" value="C:chloroplast stroma"/>
    <property type="evidence" value="ECO:0000318"/>
    <property type="project" value="GO_Central"/>
</dbReference>
<dbReference type="GO" id="GO:0000287">
    <property type="term" value="F:magnesium ion binding"/>
    <property type="evidence" value="ECO:0000314"/>
    <property type="project" value="UniProtKB"/>
</dbReference>
<dbReference type="GO" id="GO:0004659">
    <property type="term" value="F:prenyltransferase activity"/>
    <property type="evidence" value="ECO:0000314"/>
    <property type="project" value="UniProtKB"/>
</dbReference>
<dbReference type="GO" id="GO:0009668">
    <property type="term" value="P:plastid membrane organization"/>
    <property type="evidence" value="ECO:0000318"/>
    <property type="project" value="GO_Central"/>
</dbReference>
<dbReference type="GO" id="GO:0016094">
    <property type="term" value="P:polyprenol biosynthetic process"/>
    <property type="evidence" value="ECO:0000318"/>
    <property type="project" value="GO_Central"/>
</dbReference>
<dbReference type="GO" id="GO:0009409">
    <property type="term" value="P:response to cold"/>
    <property type="evidence" value="ECO:0000318"/>
    <property type="project" value="GO_Central"/>
</dbReference>
<dbReference type="CDD" id="cd00475">
    <property type="entry name" value="Cis_IPPS"/>
    <property type="match status" value="1"/>
</dbReference>
<dbReference type="FunFam" id="3.40.1180.10:FF:000001">
    <property type="entry name" value="(2E,6E)-farnesyl-diphosphate-specific ditrans,polycis-undecaprenyl-diphosphate synthase"/>
    <property type="match status" value="1"/>
</dbReference>
<dbReference type="Gene3D" id="3.40.1180.10">
    <property type="entry name" value="Decaprenyl diphosphate synthase-like"/>
    <property type="match status" value="1"/>
</dbReference>
<dbReference type="HAMAP" id="MF_01139">
    <property type="entry name" value="ISPT"/>
    <property type="match status" value="1"/>
</dbReference>
<dbReference type="InterPro" id="IPR001441">
    <property type="entry name" value="UPP_synth-like"/>
</dbReference>
<dbReference type="InterPro" id="IPR018520">
    <property type="entry name" value="UPP_synth-like_CS"/>
</dbReference>
<dbReference type="InterPro" id="IPR036424">
    <property type="entry name" value="UPP_synth-like_sf"/>
</dbReference>
<dbReference type="NCBIfam" id="TIGR00055">
    <property type="entry name" value="uppS"/>
    <property type="match status" value="1"/>
</dbReference>
<dbReference type="PANTHER" id="PTHR10291:SF41">
    <property type="entry name" value="CIS-PRENYLTRANSFERASE 7, CHLOROPLASTIC"/>
    <property type="match status" value="1"/>
</dbReference>
<dbReference type="PANTHER" id="PTHR10291">
    <property type="entry name" value="DEHYDRODOLICHYL DIPHOSPHATE SYNTHASE FAMILY MEMBER"/>
    <property type="match status" value="1"/>
</dbReference>
<dbReference type="Pfam" id="PF01255">
    <property type="entry name" value="Prenyltransf"/>
    <property type="match status" value="1"/>
</dbReference>
<dbReference type="SUPFAM" id="SSF64005">
    <property type="entry name" value="Undecaprenyl diphosphate synthase"/>
    <property type="match status" value="1"/>
</dbReference>
<dbReference type="PROSITE" id="PS01066">
    <property type="entry name" value="UPP_SYNTHASE"/>
    <property type="match status" value="1"/>
</dbReference>
<sequence>MLSLGFSLPPPSDNKLIITNNNQYNYRTNLANVCSNNNVNAVGDQLVTLPEGLKHVAVIMDGHRRWAKNKGLTVKQGHRAGGEKIQVLTRLCSQWGVKVLTIFAFSTENWVRLEEEVDFLMKLFLELIGSQEILDEWTRDGRRVSFIGDKSIFSKSLQEALAVMEERTKFNSGLHVIIAINYSGRQDILQATKSIAIKVKNGDLTVKDIDQSLFEQELDTHCTEFSEPDLLIRTSGEKRVSNFMLWQLAYTELYFANKLFPDMEEADFIEALTSFKSRQRRYGGKKI</sequence>
<evidence type="ECO:0000250" key="1">
    <source>
        <dbReference type="UniProtKB" id="P60472"/>
    </source>
</evidence>
<evidence type="ECO:0000255" key="2"/>
<evidence type="ECO:0000269" key="3">
    <source>
    </source>
</evidence>
<evidence type="ECO:0000303" key="4">
    <source>
    </source>
</evidence>
<evidence type="ECO:0000305" key="5"/>
<feature type="transit peptide" description="Chloroplast" evidence="2">
    <location>
        <begin position="1"/>
        <end position="34"/>
    </location>
</feature>
<feature type="chain" id="PRO_0000450938" description="Cis-prenyltransferase 7, chloroplastic">
    <location>
        <begin position="35"/>
        <end position="287"/>
    </location>
</feature>
<feature type="active site" evidence="1">
    <location>
        <position position="61"/>
    </location>
</feature>
<keyword id="KW-0150">Chloroplast</keyword>
<keyword id="KW-0460">Magnesium</keyword>
<keyword id="KW-0479">Metal-binding</keyword>
<keyword id="KW-0934">Plastid</keyword>
<keyword id="KW-1185">Reference proteome</keyword>
<keyword id="KW-0808">Transferase</keyword>
<keyword id="KW-0809">Transit peptide</keyword>
<proteinExistence type="evidence at transcript level"/>
<reference key="1">
    <citation type="journal article" date="2013" name="Plant J.">
        <title>The tomato cis-prenyltransferase gene family.</title>
        <authorList>
            <person name="Akhtar T.A."/>
            <person name="Matsuba Y."/>
            <person name="Schauvinhold I."/>
            <person name="Yu G."/>
            <person name="Lees H.A."/>
            <person name="Klein S.E."/>
            <person name="Pichersky E."/>
        </authorList>
    </citation>
    <scope>NUCLEOTIDE SEQUENCE [GENOMIC DNA]</scope>
    <scope>FUNCTION</scope>
    <scope>COFACTOR</scope>
    <scope>SUBCELLULAR LOCATION</scope>
    <scope>TISSUE SPECIFICITY</scope>
</reference>
<reference key="2">
    <citation type="journal article" date="2012" name="Nature">
        <title>The tomato genome sequence provides insights into fleshy fruit evolution.</title>
        <authorList>
            <consortium name="Tomato Genome Consortium"/>
        </authorList>
    </citation>
    <scope>NUCLEOTIDE SEQUENCE [LARGE SCALE GENOMIC DNA]</scope>
    <source>
        <strain>cv. Heinz 1706</strain>
    </source>
</reference>
<protein>
    <recommendedName>
        <fullName evidence="4">Cis-prenyltransferase 7, chloroplastic</fullName>
        <shortName evidence="4">SlCPT7</shortName>
        <ecNumber evidence="5">2.5.1.-</ecNumber>
    </recommendedName>
</protein>